<protein>
    <recommendedName>
        <fullName evidence="1">3-hydroxyacyl-[acyl-carrier-protein] dehydratase FabZ</fullName>
        <ecNumber evidence="1">4.2.1.59</ecNumber>
    </recommendedName>
    <alternativeName>
        <fullName evidence="1">(3R)-hydroxymyristoyl-[acyl-carrier-protein] dehydratase</fullName>
        <shortName evidence="1">(3R)-hydroxymyristoyl-ACP dehydrase</shortName>
    </alternativeName>
    <alternativeName>
        <fullName evidence="1">Beta-hydroxyacyl-ACP dehydratase</fullName>
    </alternativeName>
</protein>
<gene>
    <name evidence="1" type="primary">fabZ</name>
    <name type="ordered locus">DVU_2368</name>
</gene>
<keyword id="KW-0963">Cytoplasm</keyword>
<keyword id="KW-0441">Lipid A biosynthesis</keyword>
<keyword id="KW-0444">Lipid biosynthesis</keyword>
<keyword id="KW-0443">Lipid metabolism</keyword>
<keyword id="KW-0456">Lyase</keyword>
<keyword id="KW-1185">Reference proteome</keyword>
<dbReference type="EC" id="4.2.1.59" evidence="1"/>
<dbReference type="EMBL" id="AE017285">
    <property type="protein sequence ID" value="AAS96841.1"/>
    <property type="molecule type" value="Genomic_DNA"/>
</dbReference>
<dbReference type="RefSeq" id="WP_010939641.1">
    <property type="nucleotide sequence ID" value="NC_002937.3"/>
</dbReference>
<dbReference type="RefSeq" id="YP_011581.1">
    <property type="nucleotide sequence ID" value="NC_002937.3"/>
</dbReference>
<dbReference type="SMR" id="P61452"/>
<dbReference type="IntAct" id="P61452">
    <property type="interactions" value="2"/>
</dbReference>
<dbReference type="STRING" id="882.DVU_2368"/>
<dbReference type="PaxDb" id="882-DVU_2368"/>
<dbReference type="EnsemblBacteria" id="AAS96841">
    <property type="protein sequence ID" value="AAS96841"/>
    <property type="gene ID" value="DVU_2368"/>
</dbReference>
<dbReference type="KEGG" id="dvu:DVU_2368"/>
<dbReference type="PATRIC" id="fig|882.5.peg.2143"/>
<dbReference type="eggNOG" id="COG0764">
    <property type="taxonomic scope" value="Bacteria"/>
</dbReference>
<dbReference type="HOGENOM" id="CLU_078912_1_2_7"/>
<dbReference type="OrthoDB" id="9772788at2"/>
<dbReference type="PhylomeDB" id="P61452"/>
<dbReference type="Proteomes" id="UP000002194">
    <property type="component" value="Chromosome"/>
</dbReference>
<dbReference type="GO" id="GO:0005737">
    <property type="term" value="C:cytoplasm"/>
    <property type="evidence" value="ECO:0007669"/>
    <property type="project" value="UniProtKB-SubCell"/>
</dbReference>
<dbReference type="GO" id="GO:0016020">
    <property type="term" value="C:membrane"/>
    <property type="evidence" value="ECO:0007669"/>
    <property type="project" value="GOC"/>
</dbReference>
<dbReference type="GO" id="GO:0019171">
    <property type="term" value="F:(3R)-hydroxyacyl-[acyl-carrier-protein] dehydratase activity"/>
    <property type="evidence" value="ECO:0007669"/>
    <property type="project" value="UniProtKB-EC"/>
</dbReference>
<dbReference type="GO" id="GO:0006633">
    <property type="term" value="P:fatty acid biosynthetic process"/>
    <property type="evidence" value="ECO:0007669"/>
    <property type="project" value="UniProtKB-UniRule"/>
</dbReference>
<dbReference type="GO" id="GO:0009245">
    <property type="term" value="P:lipid A biosynthetic process"/>
    <property type="evidence" value="ECO:0007669"/>
    <property type="project" value="UniProtKB-UniRule"/>
</dbReference>
<dbReference type="CDD" id="cd01288">
    <property type="entry name" value="FabZ"/>
    <property type="match status" value="1"/>
</dbReference>
<dbReference type="FunFam" id="3.10.129.10:FF:000001">
    <property type="entry name" value="3-hydroxyacyl-[acyl-carrier-protein] dehydratase FabZ"/>
    <property type="match status" value="1"/>
</dbReference>
<dbReference type="Gene3D" id="3.10.129.10">
    <property type="entry name" value="Hotdog Thioesterase"/>
    <property type="match status" value="1"/>
</dbReference>
<dbReference type="HAMAP" id="MF_00406">
    <property type="entry name" value="FabZ"/>
    <property type="match status" value="1"/>
</dbReference>
<dbReference type="InterPro" id="IPR013114">
    <property type="entry name" value="FabA_FabZ"/>
</dbReference>
<dbReference type="InterPro" id="IPR010084">
    <property type="entry name" value="FabZ"/>
</dbReference>
<dbReference type="InterPro" id="IPR029069">
    <property type="entry name" value="HotDog_dom_sf"/>
</dbReference>
<dbReference type="NCBIfam" id="TIGR01750">
    <property type="entry name" value="fabZ"/>
    <property type="match status" value="1"/>
</dbReference>
<dbReference type="NCBIfam" id="NF000582">
    <property type="entry name" value="PRK00006.1"/>
    <property type="match status" value="1"/>
</dbReference>
<dbReference type="PANTHER" id="PTHR30272">
    <property type="entry name" value="3-HYDROXYACYL-[ACYL-CARRIER-PROTEIN] DEHYDRATASE"/>
    <property type="match status" value="1"/>
</dbReference>
<dbReference type="PANTHER" id="PTHR30272:SF1">
    <property type="entry name" value="3-HYDROXYACYL-[ACYL-CARRIER-PROTEIN] DEHYDRATASE"/>
    <property type="match status" value="1"/>
</dbReference>
<dbReference type="Pfam" id="PF07977">
    <property type="entry name" value="FabA"/>
    <property type="match status" value="1"/>
</dbReference>
<dbReference type="SUPFAM" id="SSF54637">
    <property type="entry name" value="Thioesterase/thiol ester dehydrase-isomerase"/>
    <property type="match status" value="1"/>
</dbReference>
<reference key="1">
    <citation type="journal article" date="2004" name="Nat. Biotechnol.">
        <title>The genome sequence of the anaerobic, sulfate-reducing bacterium Desulfovibrio vulgaris Hildenborough.</title>
        <authorList>
            <person name="Heidelberg J.F."/>
            <person name="Seshadri R."/>
            <person name="Haveman S.A."/>
            <person name="Hemme C.L."/>
            <person name="Paulsen I.T."/>
            <person name="Kolonay J.F."/>
            <person name="Eisen J.A."/>
            <person name="Ward N.L."/>
            <person name="Methe B.A."/>
            <person name="Brinkac L.M."/>
            <person name="Daugherty S.C."/>
            <person name="DeBoy R.T."/>
            <person name="Dodson R.J."/>
            <person name="Durkin A.S."/>
            <person name="Madupu R."/>
            <person name="Nelson W.C."/>
            <person name="Sullivan S.A."/>
            <person name="Fouts D.E."/>
            <person name="Haft D.H."/>
            <person name="Selengut J."/>
            <person name="Peterson J.D."/>
            <person name="Davidsen T.M."/>
            <person name="Zafar N."/>
            <person name="Zhou L."/>
            <person name="Radune D."/>
            <person name="Dimitrov G."/>
            <person name="Hance M."/>
            <person name="Tran K."/>
            <person name="Khouri H.M."/>
            <person name="Gill J."/>
            <person name="Utterback T.R."/>
            <person name="Feldblyum T.V."/>
            <person name="Wall J.D."/>
            <person name="Voordouw G."/>
            <person name="Fraser C.M."/>
        </authorList>
    </citation>
    <scope>NUCLEOTIDE SEQUENCE [LARGE SCALE GENOMIC DNA]</scope>
    <source>
        <strain>ATCC 29579 / DSM 644 / CCUG 34227 / NCIMB 8303 / VKM B-1760 / Hildenborough</strain>
    </source>
</reference>
<accession>P61452</accession>
<organism>
    <name type="scientific">Nitratidesulfovibrio vulgaris (strain ATCC 29579 / DSM 644 / CCUG 34227 / NCIMB 8303 / VKM B-1760 / Hildenborough)</name>
    <name type="common">Desulfovibrio vulgaris</name>
    <dbReference type="NCBI Taxonomy" id="882"/>
    <lineage>
        <taxon>Bacteria</taxon>
        <taxon>Pseudomonadati</taxon>
        <taxon>Thermodesulfobacteriota</taxon>
        <taxon>Desulfovibrionia</taxon>
        <taxon>Desulfovibrionales</taxon>
        <taxon>Desulfovibrionaceae</taxon>
        <taxon>Nitratidesulfovibrio</taxon>
    </lineage>
</organism>
<evidence type="ECO:0000255" key="1">
    <source>
        <dbReference type="HAMAP-Rule" id="MF_00406"/>
    </source>
</evidence>
<sequence>MIDPAQSILDIRQILGLLPHRYPFLLVDRVVEYVPGDYIKAYKNVTMNEPFFQGHFPGVPVMPGVLIMEALAQAGGILVVKSTDTAVEDKLFLFTGIESVRFRKPVYPGDKLELHCRLLKHKLKLWKMEGRAYVDGKLAAEAVMTAAVTNREDM</sequence>
<comment type="function">
    <text evidence="1">Involved in unsaturated fatty acids biosynthesis. Catalyzes the dehydration of short chain beta-hydroxyacyl-ACPs and long chain saturated and unsaturated beta-hydroxyacyl-ACPs.</text>
</comment>
<comment type="catalytic activity">
    <reaction evidence="1">
        <text>a (3R)-hydroxyacyl-[ACP] = a (2E)-enoyl-[ACP] + H2O</text>
        <dbReference type="Rhea" id="RHEA:13097"/>
        <dbReference type="Rhea" id="RHEA-COMP:9925"/>
        <dbReference type="Rhea" id="RHEA-COMP:9945"/>
        <dbReference type="ChEBI" id="CHEBI:15377"/>
        <dbReference type="ChEBI" id="CHEBI:78784"/>
        <dbReference type="ChEBI" id="CHEBI:78827"/>
        <dbReference type="EC" id="4.2.1.59"/>
    </reaction>
</comment>
<comment type="subcellular location">
    <subcellularLocation>
        <location evidence="1">Cytoplasm</location>
    </subcellularLocation>
</comment>
<comment type="similarity">
    <text evidence="1">Belongs to the thioester dehydratase family. FabZ subfamily.</text>
</comment>
<name>FABZ_NITV2</name>
<proteinExistence type="inferred from homology"/>
<feature type="chain" id="PRO_0000091672" description="3-hydroxyacyl-[acyl-carrier-protein] dehydratase FabZ">
    <location>
        <begin position="1"/>
        <end position="154"/>
    </location>
</feature>
<feature type="active site" evidence="1">
    <location>
        <position position="55"/>
    </location>
</feature>